<comment type="subunit">
    <text evidence="1">Homodimer; Interacts with PI16.</text>
</comment>
<comment type="subcellular location">
    <subcellularLocation>
        <location>Secreted</location>
    </subcellularLocation>
    <text evidence="1">Sperm surface.</text>
</comment>
<comment type="similarity">
    <text evidence="4">Belongs to the beta-microseminoprotein family.</text>
</comment>
<proteinExistence type="inferred from homology"/>
<feature type="signal peptide" evidence="3">
    <location>
        <begin position="1"/>
        <end position="20"/>
    </location>
</feature>
<feature type="chain" id="PRO_0000019270" description="Beta-microseminoprotein">
    <location>
        <begin position="21"/>
        <end position="113"/>
    </location>
</feature>
<feature type="disulfide bond" evidence="2">
    <location>
        <begin position="22"/>
        <end position="69"/>
    </location>
</feature>
<feature type="disulfide bond" evidence="2">
    <location>
        <begin position="38"/>
        <end position="61"/>
    </location>
</feature>
<feature type="disulfide bond" evidence="2">
    <location>
        <begin position="56"/>
        <end position="92"/>
    </location>
</feature>
<feature type="disulfide bond" evidence="2">
    <location>
        <begin position="59"/>
        <end position="68"/>
    </location>
</feature>
<feature type="disulfide bond" evidence="2">
    <location>
        <begin position="83"/>
        <end position="106"/>
    </location>
</feature>
<organism>
    <name type="scientific">Mus musculus</name>
    <name type="common">Mouse</name>
    <dbReference type="NCBI Taxonomy" id="10090"/>
    <lineage>
        <taxon>Eukaryota</taxon>
        <taxon>Metazoa</taxon>
        <taxon>Chordata</taxon>
        <taxon>Craniata</taxon>
        <taxon>Vertebrata</taxon>
        <taxon>Euteleostomi</taxon>
        <taxon>Mammalia</taxon>
        <taxon>Eutheria</taxon>
        <taxon>Euarchontoglires</taxon>
        <taxon>Glires</taxon>
        <taxon>Rodentia</taxon>
        <taxon>Myomorpha</taxon>
        <taxon>Muroidea</taxon>
        <taxon>Muridae</taxon>
        <taxon>Murinae</taxon>
        <taxon>Mus</taxon>
        <taxon>Mus</taxon>
    </lineage>
</organism>
<gene>
    <name type="primary">Msmb</name>
    <name type="synonym">Psp94</name>
</gene>
<dbReference type="EMBL" id="U89840">
    <property type="protein sequence ID" value="AAB49683.1"/>
    <property type="molecule type" value="mRNA"/>
</dbReference>
<dbReference type="CCDS" id="CCDS36862.1"/>
<dbReference type="RefSeq" id="NP_065622.1">
    <property type="nucleotide sequence ID" value="NM_020597.3"/>
</dbReference>
<dbReference type="SMR" id="O08540"/>
<dbReference type="FunCoup" id="O08540">
    <property type="interactions" value="8"/>
</dbReference>
<dbReference type="STRING" id="10090.ENSMUSP00000022464"/>
<dbReference type="PhosphoSitePlus" id="O08540"/>
<dbReference type="PaxDb" id="10090-ENSMUSP00000022464"/>
<dbReference type="ProteomicsDB" id="291447"/>
<dbReference type="Antibodypedia" id="72459">
    <property type="antibodies" value="772 antibodies from 31 providers"/>
</dbReference>
<dbReference type="DNASU" id="17695"/>
<dbReference type="Ensembl" id="ENSMUST00000022464.14">
    <property type="protein sequence ID" value="ENSMUSP00000022464.7"/>
    <property type="gene ID" value="ENSMUSG00000021907.14"/>
</dbReference>
<dbReference type="GeneID" id="17695"/>
<dbReference type="KEGG" id="mmu:17695"/>
<dbReference type="UCSC" id="uc007syi.2">
    <property type="organism name" value="mouse"/>
</dbReference>
<dbReference type="AGR" id="MGI:97166"/>
<dbReference type="CTD" id="4477"/>
<dbReference type="MGI" id="MGI:97166">
    <property type="gene designation" value="Msmb"/>
</dbReference>
<dbReference type="VEuPathDB" id="HostDB:ENSMUSG00000021907"/>
<dbReference type="eggNOG" id="ENOG502SF48">
    <property type="taxonomic scope" value="Eukaryota"/>
</dbReference>
<dbReference type="GeneTree" id="ENSGT00940000154371"/>
<dbReference type="HOGENOM" id="CLU_144891_0_0_1"/>
<dbReference type="InParanoid" id="O08540"/>
<dbReference type="OMA" id="ETEIICC"/>
<dbReference type="OrthoDB" id="6076852at2759"/>
<dbReference type="PhylomeDB" id="O08540"/>
<dbReference type="TreeFam" id="TF338336"/>
<dbReference type="BioGRID-ORCS" id="17695">
    <property type="hits" value="2 hits in 79 CRISPR screens"/>
</dbReference>
<dbReference type="ChiTaRS" id="Msmb">
    <property type="organism name" value="mouse"/>
</dbReference>
<dbReference type="PRO" id="PR:O08540"/>
<dbReference type="Proteomes" id="UP000000589">
    <property type="component" value="Chromosome 14"/>
</dbReference>
<dbReference type="RNAct" id="O08540">
    <property type="molecule type" value="protein"/>
</dbReference>
<dbReference type="Bgee" id="ENSMUSG00000021907">
    <property type="expression patterns" value="Expressed in prostate gland ventral lobe and 12 other cell types or tissues"/>
</dbReference>
<dbReference type="GO" id="GO:0005576">
    <property type="term" value="C:extracellular region"/>
    <property type="evidence" value="ECO:0007669"/>
    <property type="project" value="UniProtKB-SubCell"/>
</dbReference>
<dbReference type="Gene3D" id="2.20.25.590">
    <property type="match status" value="1"/>
</dbReference>
<dbReference type="Gene3D" id="2.10.70.10">
    <property type="entry name" value="Complement Module, domain 1"/>
    <property type="match status" value="1"/>
</dbReference>
<dbReference type="InterPro" id="IPR008735">
    <property type="entry name" value="PSP94"/>
</dbReference>
<dbReference type="PANTHER" id="PTHR10500">
    <property type="entry name" value="BETA-MICROSEMINOPROTEIN"/>
    <property type="match status" value="1"/>
</dbReference>
<dbReference type="PANTHER" id="PTHR10500:SF8">
    <property type="entry name" value="BETA-MICROSEMINOPROTEIN"/>
    <property type="match status" value="1"/>
</dbReference>
<dbReference type="Pfam" id="PF05825">
    <property type="entry name" value="PSP94"/>
    <property type="match status" value="1"/>
</dbReference>
<reference key="1">
    <citation type="submission" date="1997-03" db="EMBL/GenBank/DDBJ databases">
        <title>Rapid evolution of PSP94 cDNA sequence in rodents.</title>
        <authorList>
            <person name="Xuan J.W."/>
            <person name="Mbikay M."/>
            <person name="Wu D."/>
            <person name="Guo Y."/>
            <person name="Chin J.L."/>
        </authorList>
    </citation>
    <scope>NUCLEOTIDE SEQUENCE [MRNA]</scope>
    <source>
        <strain>CD-1</strain>
    </source>
</reference>
<sequence length="113" mass="12845">MEAWLGSLLFLATMVIASKAVCSIENREIFPNQMSDDCMDADGNKHFLNTPWKKNCTWCSCDKTSITCCTNATRPLSYDKDNCDVQFHPENCTYSVVDRKNPGKTCRVDSWTM</sequence>
<protein>
    <recommendedName>
        <fullName>Beta-microseminoprotein</fullName>
    </recommendedName>
    <alternativeName>
        <fullName>Prostate secreted seminal plasma protein</fullName>
    </alternativeName>
    <alternativeName>
        <fullName>Prostate secretory protein of 94 amino acids</fullName>
        <shortName>PSP-94</shortName>
        <shortName>PSP94</shortName>
    </alternativeName>
</protein>
<evidence type="ECO:0000250" key="1"/>
<evidence type="ECO:0000250" key="2">
    <source>
        <dbReference type="UniProtKB" id="P08118"/>
    </source>
</evidence>
<evidence type="ECO:0000255" key="3"/>
<evidence type="ECO:0000305" key="4"/>
<accession>O08540</accession>
<name>MSMB_MOUSE</name>
<keyword id="KW-1015">Disulfide bond</keyword>
<keyword id="KW-1185">Reference proteome</keyword>
<keyword id="KW-0964">Secreted</keyword>
<keyword id="KW-0732">Signal</keyword>